<proteinExistence type="inferred from homology"/>
<protein>
    <recommendedName>
        <fullName evidence="1">Thiazole synthase</fullName>
        <ecNumber evidence="1">2.8.1.10</ecNumber>
    </recommendedName>
</protein>
<evidence type="ECO:0000255" key="1">
    <source>
        <dbReference type="HAMAP-Rule" id="MF_00443"/>
    </source>
</evidence>
<name>THIG_VIBC1</name>
<feature type="chain" id="PRO_1000026055" description="Thiazole synthase">
    <location>
        <begin position="1"/>
        <end position="255"/>
    </location>
</feature>
<feature type="active site" description="Schiff-base intermediate with DXP" evidence="1">
    <location>
        <position position="95"/>
    </location>
</feature>
<feature type="binding site" evidence="1">
    <location>
        <position position="156"/>
    </location>
    <ligand>
        <name>1-deoxy-D-xylulose 5-phosphate</name>
        <dbReference type="ChEBI" id="CHEBI:57792"/>
    </ligand>
</feature>
<feature type="binding site" evidence="1">
    <location>
        <begin position="182"/>
        <end position="183"/>
    </location>
    <ligand>
        <name>1-deoxy-D-xylulose 5-phosphate</name>
        <dbReference type="ChEBI" id="CHEBI:57792"/>
    </ligand>
</feature>
<feature type="binding site" evidence="1">
    <location>
        <begin position="204"/>
        <end position="205"/>
    </location>
    <ligand>
        <name>1-deoxy-D-xylulose 5-phosphate</name>
        <dbReference type="ChEBI" id="CHEBI:57792"/>
    </ligand>
</feature>
<comment type="function">
    <text evidence="1">Catalyzes the rearrangement of 1-deoxy-D-xylulose 5-phosphate (DXP) to produce the thiazole phosphate moiety of thiamine. Sulfur is provided by the thiocarboxylate moiety of the carrier protein ThiS. In vitro, sulfur can be provided by H(2)S.</text>
</comment>
<comment type="catalytic activity">
    <reaction evidence="1">
        <text>[ThiS sulfur-carrier protein]-C-terminal-Gly-aminoethanethioate + 2-iminoacetate + 1-deoxy-D-xylulose 5-phosphate = [ThiS sulfur-carrier protein]-C-terminal Gly-Gly + 2-[(2R,5Z)-2-carboxy-4-methylthiazol-5(2H)-ylidene]ethyl phosphate + 2 H2O + H(+)</text>
        <dbReference type="Rhea" id="RHEA:26297"/>
        <dbReference type="Rhea" id="RHEA-COMP:12909"/>
        <dbReference type="Rhea" id="RHEA-COMP:19908"/>
        <dbReference type="ChEBI" id="CHEBI:15377"/>
        <dbReference type="ChEBI" id="CHEBI:15378"/>
        <dbReference type="ChEBI" id="CHEBI:57792"/>
        <dbReference type="ChEBI" id="CHEBI:62899"/>
        <dbReference type="ChEBI" id="CHEBI:77846"/>
        <dbReference type="ChEBI" id="CHEBI:90778"/>
        <dbReference type="ChEBI" id="CHEBI:232372"/>
        <dbReference type="EC" id="2.8.1.10"/>
    </reaction>
</comment>
<comment type="pathway">
    <text evidence="1">Cofactor biosynthesis; thiamine diphosphate biosynthesis.</text>
</comment>
<comment type="subunit">
    <text evidence="1">Homotetramer. Forms heterodimers with either ThiH or ThiS.</text>
</comment>
<comment type="subcellular location">
    <subcellularLocation>
        <location evidence="1">Cytoplasm</location>
    </subcellularLocation>
</comment>
<comment type="similarity">
    <text evidence="1">Belongs to the ThiG family.</text>
</comment>
<organism>
    <name type="scientific">Vibrio campbellii (strain ATCC BAA-1116)</name>
    <dbReference type="NCBI Taxonomy" id="2902295"/>
    <lineage>
        <taxon>Bacteria</taxon>
        <taxon>Pseudomonadati</taxon>
        <taxon>Pseudomonadota</taxon>
        <taxon>Gammaproteobacteria</taxon>
        <taxon>Vibrionales</taxon>
        <taxon>Vibrionaceae</taxon>
        <taxon>Vibrio</taxon>
    </lineage>
</organism>
<reference key="1">
    <citation type="submission" date="2007-08" db="EMBL/GenBank/DDBJ databases">
        <authorList>
            <consortium name="The Vibrio harveyi Genome Sequencing Project"/>
            <person name="Bassler B."/>
            <person name="Clifton S.W."/>
            <person name="Fulton L."/>
            <person name="Delehaunty K."/>
            <person name="Fronick C."/>
            <person name="Harrison M."/>
            <person name="Markivic C."/>
            <person name="Fulton R."/>
            <person name="Tin-Wollam A.-M."/>
            <person name="Shah N."/>
            <person name="Pepin K."/>
            <person name="Nash W."/>
            <person name="Thiruvilangam P."/>
            <person name="Bhonagiri V."/>
            <person name="Waters C."/>
            <person name="Tu K.C."/>
            <person name="Irgon J."/>
            <person name="Wilson R.K."/>
        </authorList>
    </citation>
    <scope>NUCLEOTIDE SEQUENCE [LARGE SCALE GENOMIC DNA]</scope>
    <source>
        <strain>ATCC BAA-1116 / BB120</strain>
    </source>
</reference>
<dbReference type="EC" id="2.8.1.10" evidence="1"/>
<dbReference type="EMBL" id="CP000789">
    <property type="protein sequence ID" value="ABU69383.1"/>
    <property type="molecule type" value="Genomic_DNA"/>
</dbReference>
<dbReference type="RefSeq" id="WP_012126621.1">
    <property type="nucleotide sequence ID" value="NC_009783.1"/>
</dbReference>
<dbReference type="SMR" id="A7N137"/>
<dbReference type="KEGG" id="vha:VIBHAR_00362"/>
<dbReference type="PATRIC" id="fig|338187.25.peg.2220"/>
<dbReference type="UniPathway" id="UPA00060"/>
<dbReference type="Proteomes" id="UP000008152">
    <property type="component" value="Chromosome I"/>
</dbReference>
<dbReference type="GO" id="GO:0005737">
    <property type="term" value="C:cytoplasm"/>
    <property type="evidence" value="ECO:0007669"/>
    <property type="project" value="UniProtKB-SubCell"/>
</dbReference>
<dbReference type="GO" id="GO:1990107">
    <property type="term" value="F:thiazole synthase activity"/>
    <property type="evidence" value="ECO:0007669"/>
    <property type="project" value="UniProtKB-EC"/>
</dbReference>
<dbReference type="GO" id="GO:0009229">
    <property type="term" value="P:thiamine diphosphate biosynthetic process"/>
    <property type="evidence" value="ECO:0007669"/>
    <property type="project" value="UniProtKB-UniRule"/>
</dbReference>
<dbReference type="CDD" id="cd04728">
    <property type="entry name" value="ThiG"/>
    <property type="match status" value="1"/>
</dbReference>
<dbReference type="FunFam" id="3.20.20.70:FF:000049">
    <property type="entry name" value="Thiazole synthase"/>
    <property type="match status" value="1"/>
</dbReference>
<dbReference type="Gene3D" id="3.20.20.70">
    <property type="entry name" value="Aldolase class I"/>
    <property type="match status" value="1"/>
</dbReference>
<dbReference type="HAMAP" id="MF_00443">
    <property type="entry name" value="ThiG"/>
    <property type="match status" value="1"/>
</dbReference>
<dbReference type="InterPro" id="IPR013785">
    <property type="entry name" value="Aldolase_TIM"/>
</dbReference>
<dbReference type="InterPro" id="IPR033983">
    <property type="entry name" value="Thiazole_synthase_ThiG"/>
</dbReference>
<dbReference type="InterPro" id="IPR008867">
    <property type="entry name" value="ThiG"/>
</dbReference>
<dbReference type="PANTHER" id="PTHR34266">
    <property type="entry name" value="THIAZOLE SYNTHASE"/>
    <property type="match status" value="1"/>
</dbReference>
<dbReference type="PANTHER" id="PTHR34266:SF2">
    <property type="entry name" value="THIAZOLE SYNTHASE"/>
    <property type="match status" value="1"/>
</dbReference>
<dbReference type="Pfam" id="PF05690">
    <property type="entry name" value="ThiG"/>
    <property type="match status" value="1"/>
</dbReference>
<dbReference type="SUPFAM" id="SSF110399">
    <property type="entry name" value="ThiG-like"/>
    <property type="match status" value="1"/>
</dbReference>
<accession>A7N137</accession>
<sequence length="255" mass="26947">MLKIGDKQFESRLFTGTGKFANSRLMAEAIQVSGSQLATMALKRVDVNDQQDDILLPLVQAGVNLLPNTSGAKNAKDAVFAAQLAREALGTNWLKLEIHPDPKYLMPDPIETLSAAEQLVREGFIVLPYCHADPVLCKRLEEVGCAAVMPLGAPIGSNKGIVSHDFLEIIIDQANVPVVVDAGIGSPSHAARAMEMGADAVLVNTAIAASNDPVAMAKAFKLAVESGRMAYEAGLACKVSHAVASSPLTSFLDEL</sequence>
<gene>
    <name evidence="1" type="primary">thiG</name>
    <name type="ordered locus">VIBHAR_00362</name>
</gene>
<keyword id="KW-0963">Cytoplasm</keyword>
<keyword id="KW-0704">Schiff base</keyword>
<keyword id="KW-0784">Thiamine biosynthesis</keyword>
<keyword id="KW-0808">Transferase</keyword>